<protein>
    <recommendedName>
        <fullName>Geranylgeranyl diphosphate synthase</fullName>
        <shortName>GGPP synthase</shortName>
        <ecNumber>2.5.1.29</ecNumber>
    </recommendedName>
    <alternativeName>
        <fullName>Farnesyltranstransferase</fullName>
    </alternativeName>
</protein>
<feature type="chain" id="PRO_0000123993" description="Geranylgeranyl diphosphate synthase">
    <location>
        <begin position="1"/>
        <end position="302"/>
    </location>
</feature>
<feature type="binding site" evidence="2">
    <location>
        <position position="53"/>
    </location>
    <ligand>
        <name>isopentenyl diphosphate</name>
        <dbReference type="ChEBI" id="CHEBI:128769"/>
    </ligand>
</feature>
<feature type="binding site" evidence="2">
    <location>
        <position position="56"/>
    </location>
    <ligand>
        <name>isopentenyl diphosphate</name>
        <dbReference type="ChEBI" id="CHEBI:128769"/>
    </ligand>
</feature>
<feature type="binding site" evidence="3">
    <location>
        <position position="87"/>
    </location>
    <ligand>
        <name>isopentenyl diphosphate</name>
        <dbReference type="ChEBI" id="CHEBI:128769"/>
    </ligand>
</feature>
<feature type="binding site" evidence="2">
    <location>
        <position position="94"/>
    </location>
    <ligand>
        <name>Mg(2+)</name>
        <dbReference type="ChEBI" id="CHEBI:18420"/>
        <label>1</label>
    </ligand>
</feature>
<feature type="binding site" evidence="2">
    <location>
        <position position="94"/>
    </location>
    <ligand>
        <name>Mg(2+)</name>
        <dbReference type="ChEBI" id="CHEBI:18420"/>
        <label>2</label>
    </ligand>
</feature>
<feature type="binding site" evidence="2">
    <location>
        <position position="100"/>
    </location>
    <ligand>
        <name>Mg(2+)</name>
        <dbReference type="ChEBI" id="CHEBI:18420"/>
        <label>1</label>
    </ligand>
</feature>
<feature type="binding site" evidence="2">
    <location>
        <position position="100"/>
    </location>
    <ligand>
        <name>Mg(2+)</name>
        <dbReference type="ChEBI" id="CHEBI:18420"/>
        <label>2</label>
    </ligand>
</feature>
<feature type="binding site" evidence="1">
    <location>
        <position position="105"/>
    </location>
    <ligand>
        <name>(2E,6E)-farnesyl diphosphate</name>
        <dbReference type="ChEBI" id="CHEBI:175763"/>
    </ligand>
</feature>
<feature type="binding site" evidence="2">
    <location>
        <position position="106"/>
    </location>
    <ligand>
        <name>isopentenyl diphosphate</name>
        <dbReference type="ChEBI" id="CHEBI:128769"/>
    </ligand>
</feature>
<feature type="binding site" evidence="1">
    <location>
        <position position="189"/>
    </location>
    <ligand>
        <name>(2E,6E)-farnesyl diphosphate</name>
        <dbReference type="ChEBI" id="CHEBI:175763"/>
    </ligand>
</feature>
<feature type="binding site" evidence="1">
    <location>
        <position position="190"/>
    </location>
    <ligand>
        <name>(2E,6E)-farnesyl diphosphate</name>
        <dbReference type="ChEBI" id="CHEBI:175763"/>
    </ligand>
</feature>
<feature type="binding site" evidence="1">
    <location>
        <position position="227"/>
    </location>
    <ligand>
        <name>(2E,6E)-farnesyl diphosphate</name>
        <dbReference type="ChEBI" id="CHEBI:175763"/>
    </ligand>
</feature>
<dbReference type="EC" id="2.5.1.29"/>
<dbReference type="EMBL" id="D90087">
    <property type="protein sequence ID" value="BAA14124.1"/>
    <property type="molecule type" value="Genomic_DNA"/>
</dbReference>
<dbReference type="PIR" id="A37802">
    <property type="entry name" value="A37802"/>
</dbReference>
<dbReference type="RefSeq" id="WP_176017233.1">
    <property type="nucleotide sequence ID" value="NZ_CP054909.1"/>
</dbReference>
<dbReference type="SMR" id="P21684"/>
<dbReference type="UniPathway" id="UPA00389">
    <property type="reaction ID" value="UER00564"/>
</dbReference>
<dbReference type="GO" id="GO:0004311">
    <property type="term" value="F:geranylgeranyl diphosphate synthase activity"/>
    <property type="evidence" value="ECO:0000250"/>
    <property type="project" value="UniProtKB"/>
</dbReference>
<dbReference type="GO" id="GO:0046872">
    <property type="term" value="F:metal ion binding"/>
    <property type="evidence" value="ECO:0007669"/>
    <property type="project" value="UniProtKB-KW"/>
</dbReference>
<dbReference type="GO" id="GO:0016117">
    <property type="term" value="P:carotenoid biosynthetic process"/>
    <property type="evidence" value="ECO:0007669"/>
    <property type="project" value="UniProtKB-KW"/>
</dbReference>
<dbReference type="GO" id="GO:0033386">
    <property type="term" value="P:geranylgeranyl diphosphate biosynthetic process"/>
    <property type="evidence" value="ECO:0000314"/>
    <property type="project" value="UniProtKB"/>
</dbReference>
<dbReference type="CDD" id="cd00685">
    <property type="entry name" value="Trans_IPPS_HT"/>
    <property type="match status" value="1"/>
</dbReference>
<dbReference type="FunFam" id="1.10.600.10:FF:000001">
    <property type="entry name" value="Geranylgeranyl diphosphate synthase"/>
    <property type="match status" value="1"/>
</dbReference>
<dbReference type="Gene3D" id="1.10.600.10">
    <property type="entry name" value="Farnesyl Diphosphate Synthase"/>
    <property type="match status" value="1"/>
</dbReference>
<dbReference type="InterPro" id="IPR008949">
    <property type="entry name" value="Isoprenoid_synthase_dom_sf"/>
</dbReference>
<dbReference type="InterPro" id="IPR000092">
    <property type="entry name" value="Polyprenyl_synt"/>
</dbReference>
<dbReference type="InterPro" id="IPR033749">
    <property type="entry name" value="Polyprenyl_synt_CS"/>
</dbReference>
<dbReference type="PANTHER" id="PTHR43281">
    <property type="entry name" value="FARNESYL DIPHOSPHATE SYNTHASE"/>
    <property type="match status" value="1"/>
</dbReference>
<dbReference type="PANTHER" id="PTHR43281:SF1">
    <property type="entry name" value="FARNESYL DIPHOSPHATE SYNTHASE"/>
    <property type="match status" value="1"/>
</dbReference>
<dbReference type="Pfam" id="PF00348">
    <property type="entry name" value="polyprenyl_synt"/>
    <property type="match status" value="1"/>
</dbReference>
<dbReference type="SFLD" id="SFLDS00005">
    <property type="entry name" value="Isoprenoid_Synthase_Type_I"/>
    <property type="match status" value="1"/>
</dbReference>
<dbReference type="SFLD" id="SFLDG01017">
    <property type="entry name" value="Polyprenyl_Transferase_Like"/>
    <property type="match status" value="1"/>
</dbReference>
<dbReference type="SUPFAM" id="SSF48576">
    <property type="entry name" value="Terpenoid synthases"/>
    <property type="match status" value="1"/>
</dbReference>
<dbReference type="PROSITE" id="PS00723">
    <property type="entry name" value="POLYPRENYL_SYNTHASE_1"/>
    <property type="match status" value="1"/>
</dbReference>
<dbReference type="PROSITE" id="PS00444">
    <property type="entry name" value="POLYPRENYL_SYNTHASE_2"/>
    <property type="match status" value="1"/>
</dbReference>
<sequence length="302" mass="32583">MTVCAKKHVHLTRDAAEQLLADIDRRLDQLLPVEGERDVVGAAMREGALAPGKRIRPMLLLLTARDLGCAVSHDGLLDLACAVEMVHAASLILDDMPCMDDAKLRRGRPTIHSHYGEHVAILAAVALLSKAFGVIADADGLTPLAKNRAVSELSNAIGMQGLVQGQFKDLSEGDKPRSAEAILMTNHFKTSTLFCASMQMASIVANASSEARDCLHRFSLDLGQAFQLLDDLTDGMTDTGKDSNQDAGKSTLVNLLGPRAVEERLRQHLQLASEHLSAACQHGHATQHFIQAWFDKKLAAVS</sequence>
<reference key="1">
    <citation type="journal article" date="1990" name="J. Bacteriol.">
        <title>Elucidation of the Erwinia uredovora carotenoid biosynthetic pathway by functional analysis of gene products expressed in Escherichia coli.</title>
        <authorList>
            <person name="Misawa N."/>
            <person name="Nakagawa M."/>
            <person name="Kobayashi K."/>
            <person name="Yamano S."/>
            <person name="Izawa Y."/>
            <person name="Nakamura K."/>
            <person name="Harashima K."/>
        </authorList>
    </citation>
    <scope>NUCLEOTIDE SEQUENCE [GENOMIC DNA]</scope>
    <scope>FUNCTION</scope>
    <source>
        <strain>ATCC 19321 / DSM 30080 / NCPPB 800 / NRRL B-14773 / 20D3</strain>
    </source>
</reference>
<accession>P21684</accession>
<keyword id="KW-0125">Carotenoid biosynthesis</keyword>
<keyword id="KW-0414">Isoprene biosynthesis</keyword>
<keyword id="KW-0460">Magnesium</keyword>
<keyword id="KW-0479">Metal-binding</keyword>
<keyword id="KW-0808">Transferase</keyword>
<evidence type="ECO:0000250" key="1"/>
<evidence type="ECO:0000250" key="2">
    <source>
        <dbReference type="UniProtKB" id="P14324"/>
    </source>
</evidence>
<evidence type="ECO:0000250" key="3">
    <source>
        <dbReference type="UniProtKB" id="Q12051"/>
    </source>
</evidence>
<evidence type="ECO:0000305" key="4"/>
<evidence type="ECO:0000305" key="5">
    <source>
    </source>
</evidence>
<proteinExistence type="inferred from homology"/>
<name>CRTE_PANAN</name>
<comment type="function">
    <text evidence="5">Catalyzes the condensation of farnesyl diphosphate (FPP) and isopentenyl diphosphate (IPP) to yield geranylgeranyl diphosphate (GGPP) needed for biosynthesis of carotenoids and diterpenes.</text>
</comment>
<comment type="catalytic activity">
    <reaction>
        <text>isopentenyl diphosphate + (2E,6E)-farnesyl diphosphate = (2E,6E,10E)-geranylgeranyl diphosphate + diphosphate</text>
        <dbReference type="Rhea" id="RHEA:17653"/>
        <dbReference type="ChEBI" id="CHEBI:33019"/>
        <dbReference type="ChEBI" id="CHEBI:58756"/>
        <dbReference type="ChEBI" id="CHEBI:128769"/>
        <dbReference type="ChEBI" id="CHEBI:175763"/>
        <dbReference type="EC" id="2.5.1.29"/>
    </reaction>
</comment>
<comment type="cofactor">
    <cofactor evidence="1">
        <name>Mg(2+)</name>
        <dbReference type="ChEBI" id="CHEBI:18420"/>
    </cofactor>
    <text evidence="1">Binds 2 Mg(2+) ions per subunit.</text>
</comment>
<comment type="pathway">
    <text>Isoprenoid biosynthesis; geranylgeranyl diphosphate biosynthesis; geranylgeranyl diphosphate from farnesyl diphosphate and isopentenyl diphosphate: step 1/1.</text>
</comment>
<comment type="similarity">
    <text evidence="4">Belongs to the FPP/GGPP synthase family.</text>
</comment>
<gene>
    <name type="primary">crtE</name>
</gene>
<organism>
    <name type="scientific">Pantoea ananas</name>
    <name type="common">Erwinia uredovora</name>
    <dbReference type="NCBI Taxonomy" id="553"/>
    <lineage>
        <taxon>Bacteria</taxon>
        <taxon>Pseudomonadati</taxon>
        <taxon>Pseudomonadota</taxon>
        <taxon>Gammaproteobacteria</taxon>
        <taxon>Enterobacterales</taxon>
        <taxon>Erwiniaceae</taxon>
        <taxon>Pantoea</taxon>
    </lineage>
</organism>